<feature type="chain" id="PRO_1000066918" description="Putative N-acetylmannosamine-6-phosphate 2-epimerase">
    <location>
        <begin position="1"/>
        <end position="233"/>
    </location>
</feature>
<accession>A7FG95</accession>
<organism>
    <name type="scientific">Yersinia pseudotuberculosis serotype O:1b (strain IP 31758)</name>
    <dbReference type="NCBI Taxonomy" id="349747"/>
    <lineage>
        <taxon>Bacteria</taxon>
        <taxon>Pseudomonadati</taxon>
        <taxon>Pseudomonadota</taxon>
        <taxon>Gammaproteobacteria</taxon>
        <taxon>Enterobacterales</taxon>
        <taxon>Yersiniaceae</taxon>
        <taxon>Yersinia</taxon>
    </lineage>
</organism>
<dbReference type="EC" id="5.1.3.9" evidence="1"/>
<dbReference type="EMBL" id="CP000720">
    <property type="protein sequence ID" value="ABS46079.1"/>
    <property type="molecule type" value="Genomic_DNA"/>
</dbReference>
<dbReference type="SMR" id="A7FG95"/>
<dbReference type="KEGG" id="ypi:YpsIP31758_1294"/>
<dbReference type="HOGENOM" id="CLU_086300_0_0_6"/>
<dbReference type="UniPathway" id="UPA00629">
    <property type="reaction ID" value="UER00682"/>
</dbReference>
<dbReference type="Proteomes" id="UP000002412">
    <property type="component" value="Chromosome"/>
</dbReference>
<dbReference type="GO" id="GO:0005829">
    <property type="term" value="C:cytosol"/>
    <property type="evidence" value="ECO:0007669"/>
    <property type="project" value="TreeGrafter"/>
</dbReference>
<dbReference type="GO" id="GO:0047465">
    <property type="term" value="F:N-acylglucosamine-6-phosphate 2-epimerase activity"/>
    <property type="evidence" value="ECO:0007669"/>
    <property type="project" value="UniProtKB-EC"/>
</dbReference>
<dbReference type="GO" id="GO:0005975">
    <property type="term" value="P:carbohydrate metabolic process"/>
    <property type="evidence" value="ECO:0007669"/>
    <property type="project" value="UniProtKB-UniRule"/>
</dbReference>
<dbReference type="GO" id="GO:0006053">
    <property type="term" value="P:N-acetylmannosamine catabolic process"/>
    <property type="evidence" value="ECO:0007669"/>
    <property type="project" value="TreeGrafter"/>
</dbReference>
<dbReference type="GO" id="GO:0019262">
    <property type="term" value="P:N-acetylneuraminate catabolic process"/>
    <property type="evidence" value="ECO:0007669"/>
    <property type="project" value="UniProtKB-UniRule"/>
</dbReference>
<dbReference type="CDD" id="cd04729">
    <property type="entry name" value="NanE"/>
    <property type="match status" value="1"/>
</dbReference>
<dbReference type="FunFam" id="3.20.20.70:FF:000035">
    <property type="entry name" value="Putative N-acetylmannosamine-6-phosphate 2-epimerase"/>
    <property type="match status" value="1"/>
</dbReference>
<dbReference type="Gene3D" id="3.20.20.70">
    <property type="entry name" value="Aldolase class I"/>
    <property type="match status" value="1"/>
</dbReference>
<dbReference type="HAMAP" id="MF_01235">
    <property type="entry name" value="ManNAc6P_epimer"/>
    <property type="match status" value="1"/>
</dbReference>
<dbReference type="InterPro" id="IPR013785">
    <property type="entry name" value="Aldolase_TIM"/>
</dbReference>
<dbReference type="InterPro" id="IPR007260">
    <property type="entry name" value="NanE"/>
</dbReference>
<dbReference type="InterPro" id="IPR011060">
    <property type="entry name" value="RibuloseP-bd_barrel"/>
</dbReference>
<dbReference type="NCBIfam" id="NF002231">
    <property type="entry name" value="PRK01130.1"/>
    <property type="match status" value="1"/>
</dbReference>
<dbReference type="PANTHER" id="PTHR36204">
    <property type="entry name" value="N-ACETYLMANNOSAMINE-6-PHOSPHATE 2-EPIMERASE-RELATED"/>
    <property type="match status" value="1"/>
</dbReference>
<dbReference type="PANTHER" id="PTHR36204:SF1">
    <property type="entry name" value="N-ACETYLMANNOSAMINE-6-PHOSPHATE 2-EPIMERASE-RELATED"/>
    <property type="match status" value="1"/>
</dbReference>
<dbReference type="Pfam" id="PF04131">
    <property type="entry name" value="NanE"/>
    <property type="match status" value="1"/>
</dbReference>
<dbReference type="SUPFAM" id="SSF51366">
    <property type="entry name" value="Ribulose-phoshate binding barrel"/>
    <property type="match status" value="1"/>
</dbReference>
<proteinExistence type="inferred from homology"/>
<keyword id="KW-0119">Carbohydrate metabolism</keyword>
<keyword id="KW-0413">Isomerase</keyword>
<reference key="1">
    <citation type="journal article" date="2007" name="PLoS Genet.">
        <title>The complete genome sequence of Yersinia pseudotuberculosis IP31758, the causative agent of Far East scarlet-like fever.</title>
        <authorList>
            <person name="Eppinger M."/>
            <person name="Rosovitz M.J."/>
            <person name="Fricke W.F."/>
            <person name="Rasko D.A."/>
            <person name="Kokorina G."/>
            <person name="Fayolle C."/>
            <person name="Lindler L.E."/>
            <person name="Carniel E."/>
            <person name="Ravel J."/>
        </authorList>
    </citation>
    <scope>NUCLEOTIDE SEQUENCE [LARGE SCALE GENOMIC DNA]</scope>
    <source>
        <strain>IP 31758</strain>
    </source>
</reference>
<comment type="function">
    <text evidence="1">Converts N-acetylmannosamine-6-phosphate (ManNAc-6-P) to N-acetylglucosamine-6-phosphate (GlcNAc-6-P).</text>
</comment>
<comment type="catalytic activity">
    <reaction evidence="1">
        <text>an N-acyl-D-glucosamine 6-phosphate = an N-acyl-D-mannosamine 6-phosphate</text>
        <dbReference type="Rhea" id="RHEA:23932"/>
        <dbReference type="ChEBI" id="CHEBI:57599"/>
        <dbReference type="ChEBI" id="CHEBI:57666"/>
        <dbReference type="EC" id="5.1.3.9"/>
    </reaction>
</comment>
<comment type="pathway">
    <text evidence="1">Amino-sugar metabolism; N-acetylneuraminate degradation; D-fructose 6-phosphate from N-acetylneuraminate: step 3/5.</text>
</comment>
<comment type="similarity">
    <text evidence="1">Belongs to the NanE family.</text>
</comment>
<evidence type="ECO:0000255" key="1">
    <source>
        <dbReference type="HAMAP-Rule" id="MF_01235"/>
    </source>
</evidence>
<gene>
    <name evidence="1" type="primary">nanE</name>
    <name type="ordered locus">YpsIP31758_1294</name>
</gene>
<protein>
    <recommendedName>
        <fullName evidence="1">Putative N-acetylmannosamine-6-phosphate 2-epimerase</fullName>
        <ecNumber evidence="1">5.1.3.9</ecNumber>
    </recommendedName>
    <alternativeName>
        <fullName evidence="1">ManNAc-6-P epimerase</fullName>
    </alternativeName>
</protein>
<sequence length="233" mass="24499">MSNLSNLRHKLQNGLIASCQPVPGSAMDTPEIVAAMACAALAGGAVGLRIEGISNIRAVRRATDAPIIGIIKRDLPDSEVRITPWLEDIDALSAAGADIIAFDVTCRERPVSVADLYQRARATGCLTMADASNIDDGLLAHHLGIDFIGTTLSGYTQAIVPTEPDLALVTQLAQAGCRVIAEGRYHSPALAAAAISAGAYAVTVGSAITRIEHICGWFCDAIKQCETEKLTEY</sequence>
<name>NANE_YERP3</name>